<evidence type="ECO:0000255" key="1">
    <source>
        <dbReference type="HAMAP-Rule" id="MF_00113"/>
    </source>
</evidence>
<gene>
    <name evidence="1" type="primary">queA</name>
    <name type="ordered locus">Mlg_1214</name>
</gene>
<comment type="function">
    <text evidence="1">Transfers and isomerizes the ribose moiety from AdoMet to the 7-aminomethyl group of 7-deazaguanine (preQ1-tRNA) to give epoxyqueuosine (oQ-tRNA).</text>
</comment>
<comment type="catalytic activity">
    <reaction evidence="1">
        <text>7-aminomethyl-7-carbaguanosine(34) in tRNA + S-adenosyl-L-methionine = epoxyqueuosine(34) in tRNA + adenine + L-methionine + 2 H(+)</text>
        <dbReference type="Rhea" id="RHEA:32155"/>
        <dbReference type="Rhea" id="RHEA-COMP:10342"/>
        <dbReference type="Rhea" id="RHEA-COMP:18582"/>
        <dbReference type="ChEBI" id="CHEBI:15378"/>
        <dbReference type="ChEBI" id="CHEBI:16708"/>
        <dbReference type="ChEBI" id="CHEBI:57844"/>
        <dbReference type="ChEBI" id="CHEBI:59789"/>
        <dbReference type="ChEBI" id="CHEBI:82833"/>
        <dbReference type="ChEBI" id="CHEBI:194443"/>
        <dbReference type="EC" id="2.4.99.17"/>
    </reaction>
</comment>
<comment type="pathway">
    <text evidence="1">tRNA modification; tRNA-queuosine biosynthesis.</text>
</comment>
<comment type="subunit">
    <text evidence="1">Monomer.</text>
</comment>
<comment type="subcellular location">
    <subcellularLocation>
        <location evidence="1">Cytoplasm</location>
    </subcellularLocation>
</comment>
<comment type="similarity">
    <text evidence="1">Belongs to the QueA family.</text>
</comment>
<organism>
    <name type="scientific">Alkalilimnicola ehrlichii (strain ATCC BAA-1101 / DSM 17681 / MLHE-1)</name>
    <dbReference type="NCBI Taxonomy" id="187272"/>
    <lineage>
        <taxon>Bacteria</taxon>
        <taxon>Pseudomonadati</taxon>
        <taxon>Pseudomonadota</taxon>
        <taxon>Gammaproteobacteria</taxon>
        <taxon>Chromatiales</taxon>
        <taxon>Ectothiorhodospiraceae</taxon>
        <taxon>Alkalilimnicola</taxon>
    </lineage>
</organism>
<protein>
    <recommendedName>
        <fullName evidence="1">S-adenosylmethionine:tRNA ribosyltransferase-isomerase</fullName>
        <ecNumber evidence="1">2.4.99.17</ecNumber>
    </recommendedName>
    <alternativeName>
        <fullName evidence="1">Queuosine biosynthesis protein QueA</fullName>
    </alternativeName>
</protein>
<sequence length="345" mass="38069">MHVDDFSFDLPEALIAHHPPEQRRDSRLLCLDRDTGAVADRRFPDLVDLLRPEDLLVLNDTRVIPARLFGHKPTGGRVEVLVERPLDRHRVLARLRASKVPAPGTVLTLEGGVAAEVTGREGEFFTLRFTAEQTVLELLEHHGHMPLPPYIRRADVAADRERYQTVFARRPGAVAAPTAGLHFDNELLARIGARGVDTAWVTLHVGSGTFAPLRVSDPREHRMHSEWLDVPPATCAAIERARGRGGRVVAVGTTVVRALETAAQDGAVQPYQGETDIFIYPGHRFHAVDALVTNFHLPGSTLLMLVSAFAGRERVLAAYRHAVAQRYRFFSYGDAMFIAAGAADE</sequence>
<reference key="1">
    <citation type="submission" date="2006-08" db="EMBL/GenBank/DDBJ databases">
        <title>Complete sequence of Alkalilimnicola ehrilichei MLHE-1.</title>
        <authorList>
            <person name="Copeland A."/>
            <person name="Lucas S."/>
            <person name="Lapidus A."/>
            <person name="Barry K."/>
            <person name="Detter J.C."/>
            <person name="Glavina del Rio T."/>
            <person name="Hammon N."/>
            <person name="Israni S."/>
            <person name="Dalin E."/>
            <person name="Tice H."/>
            <person name="Pitluck S."/>
            <person name="Sims D."/>
            <person name="Brettin T."/>
            <person name="Bruce D."/>
            <person name="Han C."/>
            <person name="Tapia R."/>
            <person name="Gilna P."/>
            <person name="Schmutz J."/>
            <person name="Larimer F."/>
            <person name="Land M."/>
            <person name="Hauser L."/>
            <person name="Kyrpides N."/>
            <person name="Mikhailova N."/>
            <person name="Oremland R.S."/>
            <person name="Hoeft S.E."/>
            <person name="Switzer-Blum J."/>
            <person name="Kulp T."/>
            <person name="King G."/>
            <person name="Tabita R."/>
            <person name="Witte B."/>
            <person name="Santini J.M."/>
            <person name="Basu P."/>
            <person name="Hollibaugh J.T."/>
            <person name="Xie G."/>
            <person name="Stolz J.F."/>
            <person name="Richardson P."/>
        </authorList>
    </citation>
    <scope>NUCLEOTIDE SEQUENCE [LARGE SCALE GENOMIC DNA]</scope>
    <source>
        <strain>ATCC BAA-1101 / DSM 17681 / MLHE-1</strain>
    </source>
</reference>
<dbReference type="EC" id="2.4.99.17" evidence="1"/>
<dbReference type="EMBL" id="CP000453">
    <property type="protein sequence ID" value="ABI56563.1"/>
    <property type="molecule type" value="Genomic_DNA"/>
</dbReference>
<dbReference type="RefSeq" id="WP_011628958.1">
    <property type="nucleotide sequence ID" value="NC_008340.1"/>
</dbReference>
<dbReference type="SMR" id="Q0A9C4"/>
<dbReference type="KEGG" id="aeh:Mlg_1214"/>
<dbReference type="eggNOG" id="COG0809">
    <property type="taxonomic scope" value="Bacteria"/>
</dbReference>
<dbReference type="HOGENOM" id="CLU_039110_1_0_6"/>
<dbReference type="OrthoDB" id="9805933at2"/>
<dbReference type="UniPathway" id="UPA00392"/>
<dbReference type="Proteomes" id="UP000001962">
    <property type="component" value="Chromosome"/>
</dbReference>
<dbReference type="GO" id="GO:0005737">
    <property type="term" value="C:cytoplasm"/>
    <property type="evidence" value="ECO:0007669"/>
    <property type="project" value="UniProtKB-SubCell"/>
</dbReference>
<dbReference type="GO" id="GO:0051075">
    <property type="term" value="F:S-adenosylmethionine:tRNA ribosyltransferase-isomerase activity"/>
    <property type="evidence" value="ECO:0007669"/>
    <property type="project" value="UniProtKB-EC"/>
</dbReference>
<dbReference type="GO" id="GO:0008616">
    <property type="term" value="P:queuosine biosynthetic process"/>
    <property type="evidence" value="ECO:0007669"/>
    <property type="project" value="UniProtKB-UniRule"/>
</dbReference>
<dbReference type="GO" id="GO:0002099">
    <property type="term" value="P:tRNA wobble guanine modification"/>
    <property type="evidence" value="ECO:0007669"/>
    <property type="project" value="TreeGrafter"/>
</dbReference>
<dbReference type="FunFam" id="3.40.1780.10:FF:000001">
    <property type="entry name" value="S-adenosylmethionine:tRNA ribosyltransferase-isomerase"/>
    <property type="match status" value="1"/>
</dbReference>
<dbReference type="Gene3D" id="2.40.10.240">
    <property type="entry name" value="QueA-like"/>
    <property type="match status" value="1"/>
</dbReference>
<dbReference type="Gene3D" id="3.40.1780.10">
    <property type="entry name" value="QueA-like"/>
    <property type="match status" value="1"/>
</dbReference>
<dbReference type="HAMAP" id="MF_00113">
    <property type="entry name" value="QueA"/>
    <property type="match status" value="1"/>
</dbReference>
<dbReference type="InterPro" id="IPR003699">
    <property type="entry name" value="QueA"/>
</dbReference>
<dbReference type="InterPro" id="IPR042118">
    <property type="entry name" value="QueA_dom1"/>
</dbReference>
<dbReference type="InterPro" id="IPR042119">
    <property type="entry name" value="QueA_dom2"/>
</dbReference>
<dbReference type="InterPro" id="IPR036100">
    <property type="entry name" value="QueA_sf"/>
</dbReference>
<dbReference type="NCBIfam" id="NF001140">
    <property type="entry name" value="PRK00147.1"/>
    <property type="match status" value="1"/>
</dbReference>
<dbReference type="NCBIfam" id="TIGR00113">
    <property type="entry name" value="queA"/>
    <property type="match status" value="1"/>
</dbReference>
<dbReference type="PANTHER" id="PTHR30307">
    <property type="entry name" value="S-ADENOSYLMETHIONINE:TRNA RIBOSYLTRANSFERASE-ISOMERASE"/>
    <property type="match status" value="1"/>
</dbReference>
<dbReference type="PANTHER" id="PTHR30307:SF0">
    <property type="entry name" value="S-ADENOSYLMETHIONINE:TRNA RIBOSYLTRANSFERASE-ISOMERASE"/>
    <property type="match status" value="1"/>
</dbReference>
<dbReference type="Pfam" id="PF02547">
    <property type="entry name" value="Queuosine_synth"/>
    <property type="match status" value="1"/>
</dbReference>
<dbReference type="SUPFAM" id="SSF111337">
    <property type="entry name" value="QueA-like"/>
    <property type="match status" value="1"/>
</dbReference>
<accession>Q0A9C4</accession>
<proteinExistence type="inferred from homology"/>
<keyword id="KW-0963">Cytoplasm</keyword>
<keyword id="KW-0671">Queuosine biosynthesis</keyword>
<keyword id="KW-1185">Reference proteome</keyword>
<keyword id="KW-0949">S-adenosyl-L-methionine</keyword>
<keyword id="KW-0808">Transferase</keyword>
<name>QUEA_ALKEH</name>
<feature type="chain" id="PRO_1000015174" description="S-adenosylmethionine:tRNA ribosyltransferase-isomerase">
    <location>
        <begin position="1"/>
        <end position="345"/>
    </location>
</feature>